<name>PANB_BRUSI</name>
<sequence length="275" mass="29446">MSAPVTRKRLTPKVIQAMKGECPIVSLTAYTTPVARLLDPHCDLLLVGDSLGMVLYGMESTLAVTLDMMIMHGQAVMRGTSHACVIVDMPFGSYQESKEQAFRNAARVMQETGCDGVKLEGGEEMAETVAFLVRRGIPVFGHVGLMPQQVNTVGGFRSLGRGDDEVGKIRRDAQAIAQAGAFAVVIEGTVEPLAREITALIDIPTVGIGASSACDGQVLVSDDMLGLFQDFTPRFVKRFAHLAPQVSQAAEAYAEEVRARRFPGPEHVFGAKPGA</sequence>
<comment type="function">
    <text evidence="1">Catalyzes the reversible reaction in which hydroxymethyl group from 5,10-methylenetetrahydrofolate is transferred onto alpha-ketoisovalerate to form ketopantoate.</text>
</comment>
<comment type="catalytic activity">
    <reaction evidence="1">
        <text>3-methyl-2-oxobutanoate + (6R)-5,10-methylene-5,6,7,8-tetrahydrofolate + H2O = 2-dehydropantoate + (6S)-5,6,7,8-tetrahydrofolate</text>
        <dbReference type="Rhea" id="RHEA:11824"/>
        <dbReference type="ChEBI" id="CHEBI:11561"/>
        <dbReference type="ChEBI" id="CHEBI:11851"/>
        <dbReference type="ChEBI" id="CHEBI:15377"/>
        <dbReference type="ChEBI" id="CHEBI:15636"/>
        <dbReference type="ChEBI" id="CHEBI:57453"/>
        <dbReference type="EC" id="2.1.2.11"/>
    </reaction>
</comment>
<comment type="cofactor">
    <cofactor evidence="1">
        <name>Mg(2+)</name>
        <dbReference type="ChEBI" id="CHEBI:18420"/>
    </cofactor>
    <text evidence="1">Binds 1 Mg(2+) ion per subunit.</text>
</comment>
<comment type="pathway">
    <text evidence="1">Cofactor biosynthesis; (R)-pantothenate biosynthesis; (R)-pantoate from 3-methyl-2-oxobutanoate: step 1/2.</text>
</comment>
<comment type="subunit">
    <text evidence="1">Homodecamer; pentamer of dimers.</text>
</comment>
<comment type="subcellular location">
    <subcellularLocation>
        <location evidence="1">Cytoplasm</location>
    </subcellularLocation>
</comment>
<comment type="similarity">
    <text evidence="1">Belongs to the PanB family.</text>
</comment>
<evidence type="ECO:0000255" key="1">
    <source>
        <dbReference type="HAMAP-Rule" id="MF_00156"/>
    </source>
</evidence>
<proteinExistence type="inferred from homology"/>
<gene>
    <name evidence="1" type="primary">panB</name>
    <name type="ordered locus">BSUIS_A0361</name>
</gene>
<accession>B0CJW1</accession>
<feature type="chain" id="PRO_1000076818" description="3-methyl-2-oxobutanoate hydroxymethyltransferase">
    <location>
        <begin position="1"/>
        <end position="275"/>
    </location>
</feature>
<feature type="active site" description="Proton acceptor" evidence="1">
    <location>
        <position position="187"/>
    </location>
</feature>
<feature type="binding site" evidence="1">
    <location>
        <begin position="49"/>
        <end position="50"/>
    </location>
    <ligand>
        <name>3-methyl-2-oxobutanoate</name>
        <dbReference type="ChEBI" id="CHEBI:11851"/>
    </ligand>
</feature>
<feature type="binding site" evidence="1">
    <location>
        <position position="49"/>
    </location>
    <ligand>
        <name>Mg(2+)</name>
        <dbReference type="ChEBI" id="CHEBI:18420"/>
    </ligand>
</feature>
<feature type="binding site" evidence="1">
    <location>
        <position position="88"/>
    </location>
    <ligand>
        <name>3-methyl-2-oxobutanoate</name>
        <dbReference type="ChEBI" id="CHEBI:11851"/>
    </ligand>
</feature>
<feature type="binding site" evidence="1">
    <location>
        <position position="88"/>
    </location>
    <ligand>
        <name>Mg(2+)</name>
        <dbReference type="ChEBI" id="CHEBI:18420"/>
    </ligand>
</feature>
<feature type="binding site" evidence="1">
    <location>
        <position position="118"/>
    </location>
    <ligand>
        <name>3-methyl-2-oxobutanoate</name>
        <dbReference type="ChEBI" id="CHEBI:11851"/>
    </ligand>
</feature>
<feature type="binding site" evidence="1">
    <location>
        <position position="120"/>
    </location>
    <ligand>
        <name>Mg(2+)</name>
        <dbReference type="ChEBI" id="CHEBI:18420"/>
    </ligand>
</feature>
<protein>
    <recommendedName>
        <fullName evidence="1">3-methyl-2-oxobutanoate hydroxymethyltransferase</fullName>
        <ecNumber evidence="1">2.1.2.11</ecNumber>
    </recommendedName>
    <alternativeName>
        <fullName evidence="1">Ketopantoate hydroxymethyltransferase</fullName>
        <shortName evidence="1">KPHMT</shortName>
    </alternativeName>
</protein>
<dbReference type="EC" id="2.1.2.11" evidence="1"/>
<dbReference type="EMBL" id="CP000911">
    <property type="protein sequence ID" value="ABY37452.1"/>
    <property type="molecule type" value="Genomic_DNA"/>
</dbReference>
<dbReference type="RefSeq" id="WP_006072153.1">
    <property type="nucleotide sequence ID" value="NC_010169.1"/>
</dbReference>
<dbReference type="SMR" id="B0CJW1"/>
<dbReference type="KEGG" id="bmt:BSUIS_A0361"/>
<dbReference type="HOGENOM" id="CLU_036645_1_0_5"/>
<dbReference type="UniPathway" id="UPA00028">
    <property type="reaction ID" value="UER00003"/>
</dbReference>
<dbReference type="Proteomes" id="UP000008545">
    <property type="component" value="Chromosome I"/>
</dbReference>
<dbReference type="GO" id="GO:0005737">
    <property type="term" value="C:cytoplasm"/>
    <property type="evidence" value="ECO:0007669"/>
    <property type="project" value="UniProtKB-SubCell"/>
</dbReference>
<dbReference type="GO" id="GO:0003864">
    <property type="term" value="F:3-methyl-2-oxobutanoate hydroxymethyltransferase activity"/>
    <property type="evidence" value="ECO:0007669"/>
    <property type="project" value="UniProtKB-UniRule"/>
</dbReference>
<dbReference type="GO" id="GO:0000287">
    <property type="term" value="F:magnesium ion binding"/>
    <property type="evidence" value="ECO:0007669"/>
    <property type="project" value="TreeGrafter"/>
</dbReference>
<dbReference type="GO" id="GO:0015940">
    <property type="term" value="P:pantothenate biosynthetic process"/>
    <property type="evidence" value="ECO:0007669"/>
    <property type="project" value="UniProtKB-UniRule"/>
</dbReference>
<dbReference type="CDD" id="cd06557">
    <property type="entry name" value="KPHMT-like"/>
    <property type="match status" value="1"/>
</dbReference>
<dbReference type="FunFam" id="3.20.20.60:FF:000003">
    <property type="entry name" value="3-methyl-2-oxobutanoate hydroxymethyltransferase"/>
    <property type="match status" value="1"/>
</dbReference>
<dbReference type="Gene3D" id="3.20.20.60">
    <property type="entry name" value="Phosphoenolpyruvate-binding domains"/>
    <property type="match status" value="1"/>
</dbReference>
<dbReference type="HAMAP" id="MF_00156">
    <property type="entry name" value="PanB"/>
    <property type="match status" value="1"/>
</dbReference>
<dbReference type="InterPro" id="IPR003700">
    <property type="entry name" value="Pantoate_hydroxy_MeTrfase"/>
</dbReference>
<dbReference type="InterPro" id="IPR015813">
    <property type="entry name" value="Pyrv/PenolPyrv_kinase-like_dom"/>
</dbReference>
<dbReference type="InterPro" id="IPR040442">
    <property type="entry name" value="Pyrv_kinase-like_dom_sf"/>
</dbReference>
<dbReference type="NCBIfam" id="TIGR00222">
    <property type="entry name" value="panB"/>
    <property type="match status" value="1"/>
</dbReference>
<dbReference type="NCBIfam" id="NF001452">
    <property type="entry name" value="PRK00311.1"/>
    <property type="match status" value="1"/>
</dbReference>
<dbReference type="PANTHER" id="PTHR20881">
    <property type="entry name" value="3-METHYL-2-OXOBUTANOATE HYDROXYMETHYLTRANSFERASE"/>
    <property type="match status" value="1"/>
</dbReference>
<dbReference type="PANTHER" id="PTHR20881:SF0">
    <property type="entry name" value="3-METHYL-2-OXOBUTANOATE HYDROXYMETHYLTRANSFERASE"/>
    <property type="match status" value="1"/>
</dbReference>
<dbReference type="Pfam" id="PF02548">
    <property type="entry name" value="Pantoate_transf"/>
    <property type="match status" value="1"/>
</dbReference>
<dbReference type="PIRSF" id="PIRSF000388">
    <property type="entry name" value="Pantoate_hydroxy_MeTrfase"/>
    <property type="match status" value="1"/>
</dbReference>
<dbReference type="SUPFAM" id="SSF51621">
    <property type="entry name" value="Phosphoenolpyruvate/pyruvate domain"/>
    <property type="match status" value="1"/>
</dbReference>
<organism>
    <name type="scientific">Brucella suis (strain ATCC 23445 / NCTC 10510)</name>
    <dbReference type="NCBI Taxonomy" id="470137"/>
    <lineage>
        <taxon>Bacteria</taxon>
        <taxon>Pseudomonadati</taxon>
        <taxon>Pseudomonadota</taxon>
        <taxon>Alphaproteobacteria</taxon>
        <taxon>Hyphomicrobiales</taxon>
        <taxon>Brucellaceae</taxon>
        <taxon>Brucella/Ochrobactrum group</taxon>
        <taxon>Brucella</taxon>
    </lineage>
</organism>
<reference key="1">
    <citation type="submission" date="2007-12" db="EMBL/GenBank/DDBJ databases">
        <title>Brucella suis ATCC 23445 whole genome shotgun sequencing project.</title>
        <authorList>
            <person name="Setubal J.C."/>
            <person name="Bowns C."/>
            <person name="Boyle S."/>
            <person name="Crasta O.R."/>
            <person name="Czar M.J."/>
            <person name="Dharmanolla C."/>
            <person name="Gillespie J.J."/>
            <person name="Kenyon R.W."/>
            <person name="Lu J."/>
            <person name="Mane S."/>
            <person name="Mohapatra S."/>
            <person name="Nagrani S."/>
            <person name="Purkayastha A."/>
            <person name="Rajasimha H.K."/>
            <person name="Shallom J.M."/>
            <person name="Shallom S."/>
            <person name="Shukla M."/>
            <person name="Snyder E.E."/>
            <person name="Sobral B.W."/>
            <person name="Wattam A.R."/>
            <person name="Will R."/>
            <person name="Williams K."/>
            <person name="Yoo H."/>
            <person name="Bruce D."/>
            <person name="Detter C."/>
            <person name="Munk C."/>
            <person name="Brettin T.S."/>
        </authorList>
    </citation>
    <scope>NUCLEOTIDE SEQUENCE [LARGE SCALE GENOMIC DNA]</scope>
    <source>
        <strain>ATCC 23445 / NCTC 10510</strain>
    </source>
</reference>
<keyword id="KW-0963">Cytoplasm</keyword>
<keyword id="KW-0460">Magnesium</keyword>
<keyword id="KW-0479">Metal-binding</keyword>
<keyword id="KW-0566">Pantothenate biosynthesis</keyword>
<keyword id="KW-0808">Transferase</keyword>